<name>TSP4_BOVIN</name>
<evidence type="ECO:0000250" key="1"/>
<evidence type="ECO:0000250" key="2">
    <source>
        <dbReference type="UniProtKB" id="Q9Z1T2"/>
    </source>
</evidence>
<evidence type="ECO:0000255" key="3"/>
<evidence type="ECO:0000255" key="4">
    <source>
        <dbReference type="PROSITE-ProRule" id="PRU00076"/>
    </source>
</evidence>
<evidence type="ECO:0000255" key="5">
    <source>
        <dbReference type="PROSITE-ProRule" id="PRU00635"/>
    </source>
</evidence>
<evidence type="ECO:0000256" key="6">
    <source>
        <dbReference type="SAM" id="MobiDB-lite"/>
    </source>
</evidence>
<evidence type="ECO:0000305" key="7"/>
<organism>
    <name type="scientific">Bos taurus</name>
    <name type="common">Bovine</name>
    <dbReference type="NCBI Taxonomy" id="9913"/>
    <lineage>
        <taxon>Eukaryota</taxon>
        <taxon>Metazoa</taxon>
        <taxon>Chordata</taxon>
        <taxon>Craniata</taxon>
        <taxon>Vertebrata</taxon>
        <taxon>Euteleostomi</taxon>
        <taxon>Mammalia</taxon>
        <taxon>Eutheria</taxon>
        <taxon>Laurasiatheria</taxon>
        <taxon>Artiodactyla</taxon>
        <taxon>Ruminantia</taxon>
        <taxon>Pecora</taxon>
        <taxon>Bovidae</taxon>
        <taxon>Bovinae</taxon>
        <taxon>Bos</taxon>
    </lineage>
</organism>
<gene>
    <name type="primary">THBS4</name>
</gene>
<sequence>MLAPRGATFLLLHLALQPWLGAGAQATPQVFDLLPSASQRLNPSVLQPILTDPTLNELYVISTFKLQSKSSATIFGLYSSADHSKYFEFTVMGRLNKAILRYLKNDGRIHLVVFNNLQLADGRRHRLLLRLTNLHRGAGSVELFLDCTRVDSIHNLPRAFSGLAQSPEAVELRTFQRKAHDSLEELKLVVRGSLIQVASLQDCFLQQSEPLATTNTGDFNRQFLGQMSQLNQLLGEVKDLLRQQVKETSFLRNTIAECQACGPLSFQSPTPNTLMPVVPAASPTPPVRRCDSNPCFRGVRCTDTRDGFQCGPCPEGYTGNGIVCSDVDECRYHPCYPGVRCVNLAPGFRCDACPVGFTGPMMQGVGISFAKTNKQVCTDIDECRNGACVLNSICINTLGSYRCGPCKPGYIGDQMRGCKMERNCRDPELNPCSVNAQCIEERQGDVTCVCGVGWAGDGYICGKDVDIDSYPDEELPCSARNCKKDNCKYVPNSGQEDADRDGIGDACDDDADGDGILNEQDNCVLTHNVDQRNSDKDIFGDACDNCRNVLNNDQKDTDGDGKGDACDDDMDGDGIKNILDNCQKVPNSDQEDRDGDGVGDACDSCPEVSNPNQSDVDNDLVGDSCDTNQDSDGDGHQDSTDNCPTVINSAQLDTDKDGIGDECDDDDDNDGIPDLVPPGPDNCRLVPNPAQEDSNSDGVGDICEADFDQDQVIDRIDVCPENAEVTLTDFRAYQTVVLDPEGDAQIDPNWVVLNQGMEIVQTMNSDPGLAVGYTAFNGVDFEGTFHVNTQTDDDYAGFIFGYQDSSSFYVVMWKQTEQTYWQATPFRAVAEPGIQLKAVKSKTGPGEHLRNSLWHTGDTSDQVRLLWKDSRNVGWKDKVSYRWFLQHRPQVGYIRVRFYEGSELVADSGVTIDTTMRGGRLGVFCFSQENIIWSNLKYRCNDTIPEDFQEFQTQNFDRLDK</sequence>
<dbReference type="EMBL" id="BC104630">
    <property type="protein sequence ID" value="AAI04631.1"/>
    <property type="molecule type" value="mRNA"/>
</dbReference>
<dbReference type="RefSeq" id="NP_001029900.1">
    <property type="nucleotide sequence ID" value="NM_001034728.1"/>
</dbReference>
<dbReference type="SMR" id="Q3SWW8"/>
<dbReference type="FunCoup" id="Q3SWW8">
    <property type="interactions" value="566"/>
</dbReference>
<dbReference type="STRING" id="9913.ENSBTAP00000036460"/>
<dbReference type="GlyCosmos" id="Q3SWW8">
    <property type="glycosylation" value="2 sites, No reported glycans"/>
</dbReference>
<dbReference type="GlyGen" id="Q3SWW8">
    <property type="glycosylation" value="2 sites"/>
</dbReference>
<dbReference type="PaxDb" id="9913-ENSBTAP00000036460"/>
<dbReference type="PeptideAtlas" id="Q3SWW8"/>
<dbReference type="GeneID" id="541281"/>
<dbReference type="KEGG" id="bta:541281"/>
<dbReference type="CTD" id="7060"/>
<dbReference type="eggNOG" id="ENOG502QRK8">
    <property type="taxonomic scope" value="Eukaryota"/>
</dbReference>
<dbReference type="HOGENOM" id="CLU_009257_1_1_1"/>
<dbReference type="InParanoid" id="Q3SWW8"/>
<dbReference type="OrthoDB" id="14563at2759"/>
<dbReference type="TreeFam" id="TF324917"/>
<dbReference type="Proteomes" id="UP000009136">
    <property type="component" value="Unplaced"/>
</dbReference>
<dbReference type="GO" id="GO:0062023">
    <property type="term" value="C:collagen-containing extracellular matrix"/>
    <property type="evidence" value="ECO:0000250"/>
    <property type="project" value="UniProtKB"/>
</dbReference>
<dbReference type="GO" id="GO:0005783">
    <property type="term" value="C:endoplasmic reticulum"/>
    <property type="evidence" value="ECO:0000250"/>
    <property type="project" value="UniProtKB"/>
</dbReference>
<dbReference type="GO" id="GO:0005615">
    <property type="term" value="C:extracellular space"/>
    <property type="evidence" value="ECO:0000250"/>
    <property type="project" value="UniProtKB"/>
</dbReference>
<dbReference type="GO" id="GO:0016529">
    <property type="term" value="C:sarcoplasmic reticulum"/>
    <property type="evidence" value="ECO:0000250"/>
    <property type="project" value="UniProtKB"/>
</dbReference>
<dbReference type="GO" id="GO:0005509">
    <property type="term" value="F:calcium ion binding"/>
    <property type="evidence" value="ECO:0007669"/>
    <property type="project" value="InterPro"/>
</dbReference>
<dbReference type="GO" id="GO:0008083">
    <property type="term" value="F:growth factor activity"/>
    <property type="evidence" value="ECO:0007669"/>
    <property type="project" value="UniProtKB-KW"/>
</dbReference>
<dbReference type="GO" id="GO:0048266">
    <property type="term" value="P:behavioral response to pain"/>
    <property type="evidence" value="ECO:0000250"/>
    <property type="project" value="UniProtKB"/>
</dbReference>
<dbReference type="GO" id="GO:0007155">
    <property type="term" value="P:cell adhesion"/>
    <property type="evidence" value="ECO:0007669"/>
    <property type="project" value="UniProtKB-KW"/>
</dbReference>
<dbReference type="GO" id="GO:0051781">
    <property type="term" value="P:positive regulation of cell division"/>
    <property type="evidence" value="ECO:0007669"/>
    <property type="project" value="UniProtKB-KW"/>
</dbReference>
<dbReference type="GO" id="GO:0034103">
    <property type="term" value="P:regulation of tissue remodeling"/>
    <property type="evidence" value="ECO:0000250"/>
    <property type="project" value="UniProtKB"/>
</dbReference>
<dbReference type="GO" id="GO:0034976">
    <property type="term" value="P:response to endoplasmic reticulum stress"/>
    <property type="evidence" value="ECO:0000250"/>
    <property type="project" value="UniProtKB"/>
</dbReference>
<dbReference type="GO" id="GO:0006986">
    <property type="term" value="P:response to unfolded protein"/>
    <property type="evidence" value="ECO:0007669"/>
    <property type="project" value="UniProtKB-KW"/>
</dbReference>
<dbReference type="GO" id="GO:0048771">
    <property type="term" value="P:tissue remodeling"/>
    <property type="evidence" value="ECO:0007669"/>
    <property type="project" value="UniProtKB-KW"/>
</dbReference>
<dbReference type="CDD" id="cd00054">
    <property type="entry name" value="EGF_CA"/>
    <property type="match status" value="3"/>
</dbReference>
<dbReference type="CDD" id="cd16080">
    <property type="entry name" value="TSP-4cc"/>
    <property type="match status" value="1"/>
</dbReference>
<dbReference type="FunFam" id="4.10.1080.10:FF:000004">
    <property type="entry name" value="Cartilage oligomeric matrix protein"/>
    <property type="match status" value="1"/>
</dbReference>
<dbReference type="FunFam" id="2.10.25.10:FF:000025">
    <property type="entry name" value="Thrombospondin 3"/>
    <property type="match status" value="1"/>
</dbReference>
<dbReference type="FunFam" id="2.10.25.10:FF:000027">
    <property type="entry name" value="Thrombospondin 3"/>
    <property type="match status" value="1"/>
</dbReference>
<dbReference type="FunFam" id="2.60.120.200:FF:000002">
    <property type="entry name" value="Thrombospondin 3"/>
    <property type="match status" value="1"/>
</dbReference>
<dbReference type="FunFam" id="4.10.1080.10:FF:000001">
    <property type="entry name" value="Thrombospondin 3"/>
    <property type="match status" value="1"/>
</dbReference>
<dbReference type="FunFam" id="2.10.25.10:FF:000262">
    <property type="entry name" value="Thrombospondin 4"/>
    <property type="match status" value="1"/>
</dbReference>
<dbReference type="FunFam" id="2.10.25.10:FF:000277">
    <property type="entry name" value="Thrombospondin 4"/>
    <property type="match status" value="1"/>
</dbReference>
<dbReference type="FunFam" id="2.60.120.200:FF:000123">
    <property type="entry name" value="Thrombospondin 4"/>
    <property type="match status" value="1"/>
</dbReference>
<dbReference type="FunFam" id="1.20.5.10:FF:000001">
    <property type="entry name" value="thrombospondin-3 isoform X2"/>
    <property type="match status" value="1"/>
</dbReference>
<dbReference type="Gene3D" id="1.20.5.10">
    <property type="match status" value="1"/>
</dbReference>
<dbReference type="Gene3D" id="2.60.120.200">
    <property type="match status" value="2"/>
</dbReference>
<dbReference type="Gene3D" id="2.10.25.10">
    <property type="entry name" value="Laminin"/>
    <property type="match status" value="4"/>
</dbReference>
<dbReference type="Gene3D" id="4.10.1080.10">
    <property type="entry name" value="TSP type-3 repeat"/>
    <property type="match status" value="2"/>
</dbReference>
<dbReference type="InterPro" id="IPR013320">
    <property type="entry name" value="ConA-like_dom_sf"/>
</dbReference>
<dbReference type="InterPro" id="IPR001881">
    <property type="entry name" value="EGF-like_Ca-bd_dom"/>
</dbReference>
<dbReference type="InterPro" id="IPR000742">
    <property type="entry name" value="EGF-like_dom"/>
</dbReference>
<dbReference type="InterPro" id="IPR018097">
    <property type="entry name" value="EGF_Ca-bd_CS"/>
</dbReference>
<dbReference type="InterPro" id="IPR003367">
    <property type="entry name" value="Thrombospondin_3-like_rpt"/>
</dbReference>
<dbReference type="InterPro" id="IPR017897">
    <property type="entry name" value="Thrombospondin_3_rpt"/>
</dbReference>
<dbReference type="InterPro" id="IPR008859">
    <property type="entry name" value="Thrombospondin_C"/>
</dbReference>
<dbReference type="InterPro" id="IPR024665">
    <property type="entry name" value="TSP/COMP_coiled-coil"/>
</dbReference>
<dbReference type="InterPro" id="IPR046970">
    <property type="entry name" value="TSP/COMP_coiled-coil_sf"/>
</dbReference>
<dbReference type="InterPro" id="IPR028974">
    <property type="entry name" value="TSP_type-3_rpt"/>
</dbReference>
<dbReference type="InterPro" id="IPR048287">
    <property type="entry name" value="TSPN-like_N"/>
</dbReference>
<dbReference type="PANTHER" id="PTHR10199">
    <property type="entry name" value="THROMBOSPONDIN"/>
    <property type="match status" value="1"/>
</dbReference>
<dbReference type="PANTHER" id="PTHR10199:SF92">
    <property type="entry name" value="THROMBOSPONDIN-4"/>
    <property type="match status" value="1"/>
</dbReference>
<dbReference type="Pfam" id="PF11598">
    <property type="entry name" value="COMP"/>
    <property type="match status" value="1"/>
</dbReference>
<dbReference type="Pfam" id="PF00008">
    <property type="entry name" value="EGF"/>
    <property type="match status" value="1"/>
</dbReference>
<dbReference type="Pfam" id="PF02412">
    <property type="entry name" value="TSP_3"/>
    <property type="match status" value="5"/>
</dbReference>
<dbReference type="Pfam" id="PF05735">
    <property type="entry name" value="TSP_C"/>
    <property type="match status" value="1"/>
</dbReference>
<dbReference type="SMART" id="SM00181">
    <property type="entry name" value="EGF"/>
    <property type="match status" value="4"/>
</dbReference>
<dbReference type="SMART" id="SM00179">
    <property type="entry name" value="EGF_CA"/>
    <property type="match status" value="3"/>
</dbReference>
<dbReference type="SMART" id="SM00210">
    <property type="entry name" value="TSPN"/>
    <property type="match status" value="1"/>
</dbReference>
<dbReference type="SUPFAM" id="SSF58006">
    <property type="entry name" value="Assembly domain of cartilage oligomeric matrix protein"/>
    <property type="match status" value="1"/>
</dbReference>
<dbReference type="SUPFAM" id="SSF49899">
    <property type="entry name" value="Concanavalin A-like lectins/glucanases"/>
    <property type="match status" value="2"/>
</dbReference>
<dbReference type="SUPFAM" id="SSF57196">
    <property type="entry name" value="EGF/Laminin"/>
    <property type="match status" value="2"/>
</dbReference>
<dbReference type="SUPFAM" id="SSF103647">
    <property type="entry name" value="TSP type-3 repeat"/>
    <property type="match status" value="3"/>
</dbReference>
<dbReference type="PROSITE" id="PS01186">
    <property type="entry name" value="EGF_2"/>
    <property type="match status" value="1"/>
</dbReference>
<dbReference type="PROSITE" id="PS50026">
    <property type="entry name" value="EGF_3"/>
    <property type="match status" value="4"/>
</dbReference>
<dbReference type="PROSITE" id="PS01187">
    <property type="entry name" value="EGF_CA"/>
    <property type="match status" value="2"/>
</dbReference>
<dbReference type="PROSITE" id="PS51234">
    <property type="entry name" value="TSP3"/>
    <property type="match status" value="8"/>
</dbReference>
<dbReference type="PROSITE" id="PS51236">
    <property type="entry name" value="TSP_CTER"/>
    <property type="match status" value="1"/>
</dbReference>
<protein>
    <recommendedName>
        <fullName>Thrombospondin-4</fullName>
    </recommendedName>
</protein>
<feature type="signal peptide" evidence="3">
    <location>
        <begin position="1"/>
        <end position="23"/>
    </location>
</feature>
<feature type="chain" id="PRO_0000283032" description="Thrombospondin-4">
    <location>
        <begin position="24"/>
        <end position="961"/>
    </location>
</feature>
<feature type="domain" description="Laminin G-like">
    <location>
        <begin position="24"/>
        <end position="192"/>
    </location>
</feature>
<feature type="domain" description="EGF-like 1" evidence="4">
    <location>
        <begin position="286"/>
        <end position="325"/>
    </location>
</feature>
<feature type="domain" description="EGF-like 2; calcium-binding" evidence="4">
    <location>
        <begin position="326"/>
        <end position="363"/>
    </location>
</feature>
<feature type="domain" description="EGF-like 3; calcium-binding" evidence="4">
    <location>
        <begin position="379"/>
        <end position="419"/>
    </location>
</feature>
<feature type="domain" description="EGF-like 4" evidence="4">
    <location>
        <begin position="420"/>
        <end position="462"/>
    </location>
</feature>
<feature type="repeat" description="TSP type-3 1">
    <location>
        <begin position="463"/>
        <end position="495"/>
    </location>
</feature>
<feature type="repeat" description="TSP type-3 2">
    <location>
        <begin position="496"/>
        <end position="531"/>
    </location>
</feature>
<feature type="repeat" description="TSP type-3 3">
    <location>
        <begin position="532"/>
        <end position="554"/>
    </location>
</feature>
<feature type="repeat" description="TSP type-3 4">
    <location>
        <begin position="555"/>
        <end position="590"/>
    </location>
</feature>
<feature type="repeat" description="TSP type-3 5">
    <location>
        <begin position="591"/>
        <end position="613"/>
    </location>
</feature>
<feature type="repeat" description="TSP type-3 6">
    <location>
        <begin position="614"/>
        <end position="651"/>
    </location>
</feature>
<feature type="repeat" description="TSP type-3 7">
    <location>
        <begin position="652"/>
        <end position="691"/>
    </location>
</feature>
<feature type="repeat" description="TSP type-3 8">
    <location>
        <begin position="692"/>
        <end position="727"/>
    </location>
</feature>
<feature type="domain" description="TSP C-terminal" evidence="5">
    <location>
        <begin position="731"/>
        <end position="945"/>
    </location>
</feature>
<feature type="region of interest" description="Disordered" evidence="6">
    <location>
        <begin position="581"/>
        <end position="671"/>
    </location>
</feature>
<feature type="short sequence motif" description="Cell attachment site" evidence="3">
    <location>
        <begin position="562"/>
        <end position="564"/>
    </location>
</feature>
<feature type="compositionally biased region" description="Polar residues" evidence="6">
    <location>
        <begin position="640"/>
        <end position="652"/>
    </location>
</feature>
<feature type="compositionally biased region" description="Acidic residues" evidence="6">
    <location>
        <begin position="660"/>
        <end position="671"/>
    </location>
</feature>
<feature type="glycosylation site" description="N-linked (GlcNAc...) asparagine" evidence="3">
    <location>
        <position position="612"/>
    </location>
</feature>
<feature type="glycosylation site" description="N-linked (GlcNAc...) asparagine" evidence="3">
    <location>
        <position position="941"/>
    </location>
</feature>
<feature type="disulfide bond" description="Interchain" evidence="7">
    <location>
        <position position="258"/>
    </location>
</feature>
<feature type="disulfide bond" description="Interchain" evidence="7">
    <location>
        <position position="261"/>
    </location>
</feature>
<feature type="disulfide bond" evidence="4">
    <location>
        <begin position="290"/>
        <end position="301"/>
    </location>
</feature>
<feature type="disulfide bond" evidence="4">
    <location>
        <begin position="295"/>
        <end position="310"/>
    </location>
</feature>
<feature type="disulfide bond" evidence="4">
    <location>
        <begin position="313"/>
        <end position="324"/>
    </location>
</feature>
<feature type="disulfide bond" evidence="4">
    <location>
        <begin position="330"/>
        <end position="341"/>
    </location>
</feature>
<feature type="disulfide bond" evidence="4">
    <location>
        <begin position="335"/>
        <end position="350"/>
    </location>
</feature>
<feature type="disulfide bond" evidence="4">
    <location>
        <begin position="353"/>
        <end position="377"/>
    </location>
</feature>
<feature type="disulfide bond" evidence="4">
    <location>
        <begin position="383"/>
        <end position="394"/>
    </location>
</feature>
<feature type="disulfide bond" evidence="4">
    <location>
        <begin position="388"/>
        <end position="403"/>
    </location>
</feature>
<feature type="disulfide bond" evidence="4">
    <location>
        <begin position="406"/>
        <end position="418"/>
    </location>
</feature>
<feature type="disulfide bond" evidence="4">
    <location>
        <begin position="424"/>
        <end position="438"/>
    </location>
</feature>
<feature type="disulfide bond" evidence="4">
    <location>
        <begin position="432"/>
        <end position="448"/>
    </location>
</feature>
<feature type="disulfide bond" evidence="4">
    <location>
        <begin position="450"/>
        <end position="461"/>
    </location>
</feature>
<feature type="disulfide bond" evidence="4">
    <location>
        <begin position="477"/>
        <end position="482"/>
    </location>
</feature>
<feature type="disulfide bond" evidence="4">
    <location>
        <begin position="487"/>
        <end position="507"/>
    </location>
</feature>
<feature type="disulfide bond" evidence="4">
    <location>
        <begin position="523"/>
        <end position="543"/>
    </location>
</feature>
<feature type="disulfide bond" evidence="4">
    <location>
        <begin position="546"/>
        <end position="566"/>
    </location>
</feature>
<feature type="disulfide bond" evidence="4">
    <location>
        <begin position="582"/>
        <end position="602"/>
    </location>
</feature>
<feature type="disulfide bond" evidence="4">
    <location>
        <begin position="605"/>
        <end position="625"/>
    </location>
</feature>
<feature type="disulfide bond" evidence="4">
    <location>
        <begin position="643"/>
        <end position="663"/>
    </location>
</feature>
<feature type="disulfide bond" evidence="4">
    <location>
        <begin position="683"/>
        <end position="703"/>
    </location>
</feature>
<feature type="disulfide bond" evidence="4">
    <location>
        <begin position="719"/>
        <end position="940"/>
    </location>
</feature>
<proteinExistence type="evidence at transcript level"/>
<reference key="1">
    <citation type="submission" date="2005-09" db="EMBL/GenBank/DDBJ databases">
        <authorList>
            <consortium name="NIH - Mammalian Gene Collection (MGC) project"/>
        </authorList>
    </citation>
    <scope>NUCLEOTIDE SEQUENCE [LARGE SCALE MRNA]</scope>
    <source>
        <strain>Hereford</strain>
        <tissue>Ascending colon</tissue>
    </source>
</reference>
<comment type="function">
    <text evidence="1">Adhesive glycoprotein that mediates cell-to-cell and cell-to-matrix interactions and is involved in various processes including cellular proliferation, migration, adhesion and attachment, inflammatory response to CNS injury, regulation of vascular inflammation and adaptive responses of the heart to pressure overload and in myocardial function and remodeling. Binds to structural extracellular matrix (ECM) proteins and modulates the ECM in response to tissue damage, contributing to cardioprotective and adaptive ECM remodeling. Plays a role in ER stress response, via its interaction with the activating transcription factor 6 alpha (ATF6) which produces adaptive ER stress response factors and protects myocardium from pressure overload. May contribute to spinal presynaptic hypersensitivity and neuropathic pain states after peripheral nerve injury. May play a role in regulating protective astrogenesis from the subventricular zone (SVZ) niche after injury in a NOTCH1-dependent manner (By similarity).</text>
</comment>
<comment type="subunit">
    <text evidence="1">Homopentamer; disulfide-linked. Interacts with PTBP3 (By similarity). Interacts (via EGF-like 3; calcium-binding domain) with ATF6 and facilitates its processing, activation and nuclear translocation. Interacts with NOTCH1 (By similarity).</text>
</comment>
<comment type="subcellular location">
    <subcellularLocation>
        <location evidence="2">Endoplasmic reticulum</location>
    </subcellularLocation>
    <subcellularLocation>
        <location evidence="2">Sarcoplasmic reticulum</location>
    </subcellularLocation>
    <subcellularLocation>
        <location evidence="2">Secreted</location>
    </subcellularLocation>
    <subcellularLocation>
        <location evidence="2">Secreted</location>
        <location evidence="2">Extracellular space</location>
    </subcellularLocation>
    <subcellularLocation>
        <location evidence="2">Secreted</location>
        <location evidence="2">Extracellular space</location>
        <location evidence="2">Extracellular matrix</location>
    </subcellularLocation>
</comment>
<comment type="similarity">
    <text evidence="7">Belongs to the thrombospondin family.</text>
</comment>
<accession>Q3SWW8</accession>
<keyword id="KW-0106">Calcium</keyword>
<keyword id="KW-0130">Cell adhesion</keyword>
<keyword id="KW-1015">Disulfide bond</keyword>
<keyword id="KW-0245">EGF-like domain</keyword>
<keyword id="KW-0256">Endoplasmic reticulum</keyword>
<keyword id="KW-0272">Extracellular matrix</keyword>
<keyword id="KW-0325">Glycoprotein</keyword>
<keyword id="KW-0339">Growth factor</keyword>
<keyword id="KW-0497">Mitogen</keyword>
<keyword id="KW-1185">Reference proteome</keyword>
<keyword id="KW-0677">Repeat</keyword>
<keyword id="KW-0703">Sarcoplasmic reticulum</keyword>
<keyword id="KW-0964">Secreted</keyword>
<keyword id="KW-0732">Signal</keyword>
<keyword id="KW-0797">Tissue remodeling</keyword>
<keyword id="KW-0834">Unfolded protein response</keyword>